<feature type="chain" id="PRO_0000344411" description="Putative uncharacterized protein DDB_G0292330">
    <location>
        <begin position="1"/>
        <end position="182"/>
    </location>
</feature>
<feature type="region of interest" description="Disordered" evidence="1">
    <location>
        <begin position="40"/>
        <end position="182"/>
    </location>
</feature>
<feature type="compositionally biased region" description="Low complexity" evidence="1">
    <location>
        <begin position="52"/>
        <end position="86"/>
    </location>
</feature>
<feature type="compositionally biased region" description="Acidic residues" evidence="1">
    <location>
        <begin position="87"/>
        <end position="100"/>
    </location>
</feature>
<feature type="compositionally biased region" description="Low complexity" evidence="1">
    <location>
        <begin position="104"/>
        <end position="134"/>
    </location>
</feature>
<feature type="compositionally biased region" description="Low complexity" evidence="1">
    <location>
        <begin position="148"/>
        <end position="157"/>
    </location>
</feature>
<feature type="compositionally biased region" description="Basic and acidic residues" evidence="1">
    <location>
        <begin position="165"/>
        <end position="182"/>
    </location>
</feature>
<evidence type="ECO:0000256" key="1">
    <source>
        <dbReference type="SAM" id="MobiDB-lite"/>
    </source>
</evidence>
<gene>
    <name type="ORF">DDB_G0292330</name>
</gene>
<keyword id="KW-1185">Reference proteome</keyword>
<sequence length="182" mass="20842">MEWDSTSVKETDVALYTKPQRKQSIRERYTSKFSNVEQNLLKTDDDDDDDNNNININNNNATITTTSTTTTTTTTSTTKTFTISTDNYDEDVNDDQDEGDSGYNNNNNNNNNNNNNNNNNNNNNNSNNNNNNNNKIKNKLNQLETSSDLDFNNQNNNNEDEDDEFLSKDDNIEEIQRNQKGN</sequence>
<accession>Q54DC9</accession>
<organism>
    <name type="scientific">Dictyostelium discoideum</name>
    <name type="common">Social amoeba</name>
    <dbReference type="NCBI Taxonomy" id="44689"/>
    <lineage>
        <taxon>Eukaryota</taxon>
        <taxon>Amoebozoa</taxon>
        <taxon>Evosea</taxon>
        <taxon>Eumycetozoa</taxon>
        <taxon>Dictyostelia</taxon>
        <taxon>Dictyosteliales</taxon>
        <taxon>Dictyosteliaceae</taxon>
        <taxon>Dictyostelium</taxon>
    </lineage>
</organism>
<reference key="1">
    <citation type="journal article" date="2005" name="Nature">
        <title>The genome of the social amoeba Dictyostelium discoideum.</title>
        <authorList>
            <person name="Eichinger L."/>
            <person name="Pachebat J.A."/>
            <person name="Gloeckner G."/>
            <person name="Rajandream M.A."/>
            <person name="Sucgang R."/>
            <person name="Berriman M."/>
            <person name="Song J."/>
            <person name="Olsen R."/>
            <person name="Szafranski K."/>
            <person name="Xu Q."/>
            <person name="Tunggal B."/>
            <person name="Kummerfeld S."/>
            <person name="Madera M."/>
            <person name="Konfortov B.A."/>
            <person name="Rivero F."/>
            <person name="Bankier A.T."/>
            <person name="Lehmann R."/>
            <person name="Hamlin N."/>
            <person name="Davies R."/>
            <person name="Gaudet P."/>
            <person name="Fey P."/>
            <person name="Pilcher K."/>
            <person name="Chen G."/>
            <person name="Saunders D."/>
            <person name="Sodergren E.J."/>
            <person name="Davis P."/>
            <person name="Kerhornou A."/>
            <person name="Nie X."/>
            <person name="Hall N."/>
            <person name="Anjard C."/>
            <person name="Hemphill L."/>
            <person name="Bason N."/>
            <person name="Farbrother P."/>
            <person name="Desany B."/>
            <person name="Just E."/>
            <person name="Morio T."/>
            <person name="Rost R."/>
            <person name="Churcher C.M."/>
            <person name="Cooper J."/>
            <person name="Haydock S."/>
            <person name="van Driessche N."/>
            <person name="Cronin A."/>
            <person name="Goodhead I."/>
            <person name="Muzny D.M."/>
            <person name="Mourier T."/>
            <person name="Pain A."/>
            <person name="Lu M."/>
            <person name="Harper D."/>
            <person name="Lindsay R."/>
            <person name="Hauser H."/>
            <person name="James K.D."/>
            <person name="Quiles M."/>
            <person name="Madan Babu M."/>
            <person name="Saito T."/>
            <person name="Buchrieser C."/>
            <person name="Wardroper A."/>
            <person name="Felder M."/>
            <person name="Thangavelu M."/>
            <person name="Johnson D."/>
            <person name="Knights A."/>
            <person name="Loulseged H."/>
            <person name="Mungall K.L."/>
            <person name="Oliver K."/>
            <person name="Price C."/>
            <person name="Quail M.A."/>
            <person name="Urushihara H."/>
            <person name="Hernandez J."/>
            <person name="Rabbinowitsch E."/>
            <person name="Steffen D."/>
            <person name="Sanders M."/>
            <person name="Ma J."/>
            <person name="Kohara Y."/>
            <person name="Sharp S."/>
            <person name="Simmonds M.N."/>
            <person name="Spiegler S."/>
            <person name="Tivey A."/>
            <person name="Sugano S."/>
            <person name="White B."/>
            <person name="Walker D."/>
            <person name="Woodward J.R."/>
            <person name="Winckler T."/>
            <person name="Tanaka Y."/>
            <person name="Shaulsky G."/>
            <person name="Schleicher M."/>
            <person name="Weinstock G.M."/>
            <person name="Rosenthal A."/>
            <person name="Cox E.C."/>
            <person name="Chisholm R.L."/>
            <person name="Gibbs R.A."/>
            <person name="Loomis W.F."/>
            <person name="Platzer M."/>
            <person name="Kay R.R."/>
            <person name="Williams J.G."/>
            <person name="Dear P.H."/>
            <person name="Noegel A.A."/>
            <person name="Barrell B.G."/>
            <person name="Kuspa A."/>
        </authorList>
    </citation>
    <scope>NUCLEOTIDE SEQUENCE [LARGE SCALE GENOMIC DNA]</scope>
    <source>
        <strain>AX4</strain>
    </source>
</reference>
<protein>
    <recommendedName>
        <fullName>Putative uncharacterized protein DDB_G0292330</fullName>
    </recommendedName>
</protein>
<name>Y4337_DICDI</name>
<proteinExistence type="predicted"/>
<dbReference type="EMBL" id="AAFI02000189">
    <property type="protein sequence ID" value="EAL61289.1"/>
    <property type="molecule type" value="Genomic_DNA"/>
</dbReference>
<dbReference type="RefSeq" id="XP_629712.1">
    <property type="nucleotide sequence ID" value="XM_629710.1"/>
</dbReference>
<dbReference type="PaxDb" id="44689-DDB0184337"/>
<dbReference type="EnsemblProtists" id="EAL61289">
    <property type="protein sequence ID" value="EAL61289"/>
    <property type="gene ID" value="DDB_G0292330"/>
</dbReference>
<dbReference type="GeneID" id="8628626"/>
<dbReference type="KEGG" id="ddi:DDB_G0292330"/>
<dbReference type="dictyBase" id="DDB_G0292330"/>
<dbReference type="VEuPathDB" id="AmoebaDB:DDB_G0292330"/>
<dbReference type="HOGENOM" id="CLU_1484609_0_0_1"/>
<dbReference type="InParanoid" id="Q54DC9"/>
<dbReference type="OMA" id="ECNDNAG"/>
<dbReference type="PRO" id="PR:Q54DC9"/>
<dbReference type="Proteomes" id="UP000002195">
    <property type="component" value="Chromosome 6"/>
</dbReference>